<organism>
    <name type="scientific">Azospirillum brasilense</name>
    <dbReference type="NCBI Taxonomy" id="192"/>
    <lineage>
        <taxon>Bacteria</taxon>
        <taxon>Pseudomonadati</taxon>
        <taxon>Pseudomonadota</taxon>
        <taxon>Alphaproteobacteria</taxon>
        <taxon>Rhodospirillales</taxon>
        <taxon>Azospirillaceae</taxon>
        <taxon>Azospirillum</taxon>
    </lineage>
</organism>
<gene>
    <name type="primary">tig</name>
</gene>
<dbReference type="EC" id="5.2.1.8"/>
<dbReference type="EMBL" id="AF150957">
    <property type="protein sequence ID" value="AAD37434.1"/>
    <property type="molecule type" value="Genomic_DNA"/>
</dbReference>
<dbReference type="SMR" id="Q9X6W7"/>
<dbReference type="GO" id="GO:0005737">
    <property type="term" value="C:cytoplasm"/>
    <property type="evidence" value="ECO:0007669"/>
    <property type="project" value="UniProtKB-SubCell"/>
</dbReference>
<dbReference type="GO" id="GO:0003755">
    <property type="term" value="F:peptidyl-prolyl cis-trans isomerase activity"/>
    <property type="evidence" value="ECO:0007669"/>
    <property type="project" value="UniProtKB-UniRule"/>
</dbReference>
<dbReference type="GO" id="GO:0044183">
    <property type="term" value="F:protein folding chaperone"/>
    <property type="evidence" value="ECO:0007669"/>
    <property type="project" value="TreeGrafter"/>
</dbReference>
<dbReference type="GO" id="GO:0043022">
    <property type="term" value="F:ribosome binding"/>
    <property type="evidence" value="ECO:0007669"/>
    <property type="project" value="TreeGrafter"/>
</dbReference>
<dbReference type="GO" id="GO:0051083">
    <property type="term" value="P:'de novo' cotranslational protein folding"/>
    <property type="evidence" value="ECO:0007669"/>
    <property type="project" value="TreeGrafter"/>
</dbReference>
<dbReference type="GO" id="GO:0051301">
    <property type="term" value="P:cell division"/>
    <property type="evidence" value="ECO:0007669"/>
    <property type="project" value="UniProtKB-KW"/>
</dbReference>
<dbReference type="GO" id="GO:0061077">
    <property type="term" value="P:chaperone-mediated protein folding"/>
    <property type="evidence" value="ECO:0007669"/>
    <property type="project" value="TreeGrafter"/>
</dbReference>
<dbReference type="GO" id="GO:0015031">
    <property type="term" value="P:protein transport"/>
    <property type="evidence" value="ECO:0007669"/>
    <property type="project" value="UniProtKB-UniRule"/>
</dbReference>
<dbReference type="GO" id="GO:0043335">
    <property type="term" value="P:protein unfolding"/>
    <property type="evidence" value="ECO:0007669"/>
    <property type="project" value="TreeGrafter"/>
</dbReference>
<dbReference type="FunFam" id="3.10.50.40:FF:000001">
    <property type="entry name" value="Trigger factor"/>
    <property type="match status" value="1"/>
</dbReference>
<dbReference type="Gene3D" id="3.10.50.40">
    <property type="match status" value="1"/>
</dbReference>
<dbReference type="Gene3D" id="3.30.70.1050">
    <property type="entry name" value="Trigger factor ribosome-binding domain"/>
    <property type="match status" value="1"/>
</dbReference>
<dbReference type="Gene3D" id="1.10.3120.10">
    <property type="entry name" value="Trigger factor, C-terminal domain"/>
    <property type="match status" value="1"/>
</dbReference>
<dbReference type="HAMAP" id="MF_00303">
    <property type="entry name" value="Trigger_factor_Tig"/>
    <property type="match status" value="1"/>
</dbReference>
<dbReference type="InterPro" id="IPR046357">
    <property type="entry name" value="PPIase_dom_sf"/>
</dbReference>
<dbReference type="InterPro" id="IPR001179">
    <property type="entry name" value="PPIase_FKBP_dom"/>
</dbReference>
<dbReference type="InterPro" id="IPR005215">
    <property type="entry name" value="Trig_fac"/>
</dbReference>
<dbReference type="InterPro" id="IPR008880">
    <property type="entry name" value="Trigger_fac_C"/>
</dbReference>
<dbReference type="InterPro" id="IPR037041">
    <property type="entry name" value="Trigger_fac_C_sf"/>
</dbReference>
<dbReference type="InterPro" id="IPR008881">
    <property type="entry name" value="Trigger_fac_ribosome-bd_bac"/>
</dbReference>
<dbReference type="InterPro" id="IPR036611">
    <property type="entry name" value="Trigger_fac_ribosome-bd_sf"/>
</dbReference>
<dbReference type="InterPro" id="IPR027304">
    <property type="entry name" value="Trigger_fact/SurA_dom_sf"/>
</dbReference>
<dbReference type="NCBIfam" id="TIGR00115">
    <property type="entry name" value="tig"/>
    <property type="match status" value="1"/>
</dbReference>
<dbReference type="PANTHER" id="PTHR30560">
    <property type="entry name" value="TRIGGER FACTOR CHAPERONE AND PEPTIDYL-PROLYL CIS/TRANS ISOMERASE"/>
    <property type="match status" value="1"/>
</dbReference>
<dbReference type="PANTHER" id="PTHR30560:SF3">
    <property type="entry name" value="TRIGGER FACTOR-LIKE PROTEIN TIG, CHLOROPLASTIC"/>
    <property type="match status" value="1"/>
</dbReference>
<dbReference type="Pfam" id="PF00254">
    <property type="entry name" value="FKBP_C"/>
    <property type="match status" value="1"/>
</dbReference>
<dbReference type="Pfam" id="PF05698">
    <property type="entry name" value="Trigger_C"/>
    <property type="match status" value="1"/>
</dbReference>
<dbReference type="Pfam" id="PF05697">
    <property type="entry name" value="Trigger_N"/>
    <property type="match status" value="1"/>
</dbReference>
<dbReference type="PIRSF" id="PIRSF003095">
    <property type="entry name" value="Trigger_factor"/>
    <property type="match status" value="1"/>
</dbReference>
<dbReference type="SUPFAM" id="SSF54534">
    <property type="entry name" value="FKBP-like"/>
    <property type="match status" value="1"/>
</dbReference>
<dbReference type="SUPFAM" id="SSF109998">
    <property type="entry name" value="Triger factor/SurA peptide-binding domain-like"/>
    <property type="match status" value="1"/>
</dbReference>
<dbReference type="SUPFAM" id="SSF102735">
    <property type="entry name" value="Trigger factor ribosome-binding domain"/>
    <property type="match status" value="1"/>
</dbReference>
<sequence length="444" mass="49408">MNITETSADGLKREYKVVISAQDIEQKVQGRLEELRRTVQLPGFRPGKVPVAVIKQRYGGSVLAEALEDAIADSSRQALNERGLRIAMQPKINVEKYEDGGDLSYTMGVELLPDIEPGDLSGLELEKPVATVEDSAVDEALTRLASAHSVQAPVTEDRAAEKGDIAVIDSPVRSTGEALPGMDGKDYPLELGANQFVPGFEDQLVGAKAGEHRTVKVTFPADYPHDRLKGADTVFEVDVKELRKNVPAEVNDDLAKEFGMESLEKLREAVGRPHQGRIRQRVALRVKRQLLDKLAEAHSFEVPPGMVDVEFEGIWQRLQQELQNGTAGEDAGKPEEELKTEYRGIAERRVRLGLLLSEIGRRNDIQVTQDEINRALIAEARRFPGQERQVFEFFKQNREALENLRAPIFEDKVVDYILDQAKVSEKPVSAEELMKDPDEEAEAA</sequence>
<protein>
    <recommendedName>
        <fullName>Trigger factor</fullName>
        <shortName>TF</shortName>
        <ecNumber>5.2.1.8</ecNumber>
    </recommendedName>
    <alternativeName>
        <fullName>PPIase</fullName>
    </alternativeName>
</protein>
<proteinExistence type="inferred from homology"/>
<comment type="function">
    <text evidence="1">Involved in protein export. Acts as a chaperone by maintaining the newly synthesized protein in an open conformation. Functions as a peptidyl-prolyl cis-trans isomerase (By similarity).</text>
</comment>
<comment type="catalytic activity">
    <reaction>
        <text>[protein]-peptidylproline (omega=180) = [protein]-peptidylproline (omega=0)</text>
        <dbReference type="Rhea" id="RHEA:16237"/>
        <dbReference type="Rhea" id="RHEA-COMP:10747"/>
        <dbReference type="Rhea" id="RHEA-COMP:10748"/>
        <dbReference type="ChEBI" id="CHEBI:83833"/>
        <dbReference type="ChEBI" id="CHEBI:83834"/>
        <dbReference type="EC" id="5.2.1.8"/>
    </reaction>
</comment>
<comment type="subcellular location">
    <subcellularLocation>
        <location>Cytoplasm</location>
    </subcellularLocation>
    <text evidence="1">About half TF is bound to the ribosome near the polypeptide exit tunnel while the other half is free in the cytoplasm.</text>
</comment>
<comment type="domain">
    <text evidence="1">Consists of 3 domains; the N-terminus binds the ribosome, the middle domain has PPIase activity, while the C-terminus has intrinsic chaperone activity on its own.</text>
</comment>
<comment type="similarity">
    <text evidence="2">Belongs to the FKBP-type PPIase family. Tig subfamily.</text>
</comment>
<reference key="1">
    <citation type="submission" date="1999-05" db="EMBL/GenBank/DDBJ databases">
        <title>Azospirillum brasilense tig-clp-clpx-lon.</title>
        <authorList>
            <person name="Indorato C."/>
            <person name="Giannelli L."/>
            <person name="Bazzicalupo M."/>
        </authorList>
    </citation>
    <scope>NUCLEOTIDE SEQUENCE [GENOMIC DNA]</scope>
    <source>
        <strain>SpF94</strain>
    </source>
</reference>
<evidence type="ECO:0000250" key="1"/>
<evidence type="ECO:0000305" key="2"/>
<feature type="chain" id="PRO_0000179303" description="Trigger factor">
    <location>
        <begin position="1"/>
        <end position="444"/>
    </location>
</feature>
<feature type="domain" description="PPIase FKBP-type">
    <location>
        <begin position="163"/>
        <end position="248"/>
    </location>
</feature>
<keyword id="KW-0131">Cell cycle</keyword>
<keyword id="KW-0132">Cell division</keyword>
<keyword id="KW-0143">Chaperone</keyword>
<keyword id="KW-0963">Cytoplasm</keyword>
<keyword id="KW-0413">Isomerase</keyword>
<keyword id="KW-0697">Rotamase</keyword>
<name>TIG_AZOBR</name>
<accession>Q9X6W7</accession>